<feature type="chain" id="PRO_0000218971" description="Serine incorporator 3">
    <location>
        <begin position="1"/>
        <end position="472"/>
    </location>
</feature>
<feature type="topological domain" description="Extracellular" evidence="4">
    <location>
        <begin position="1"/>
        <end position="96"/>
    </location>
</feature>
<feature type="transmembrane region" description="Helical" evidence="4">
    <location>
        <begin position="97"/>
        <end position="117"/>
    </location>
</feature>
<feature type="topological domain" description="Cytoplasmic" evidence="4">
    <location>
        <begin position="118"/>
        <end position="132"/>
    </location>
</feature>
<feature type="transmembrane region" description="Helical" evidence="4">
    <location>
        <begin position="133"/>
        <end position="153"/>
    </location>
</feature>
<feature type="topological domain" description="Extracellular" evidence="4">
    <location>
        <begin position="154"/>
        <end position="158"/>
    </location>
</feature>
<feature type="transmembrane region" description="Helical" evidence="4">
    <location>
        <begin position="159"/>
        <end position="179"/>
    </location>
</feature>
<feature type="topological domain" description="Cytoplasmic" evidence="4">
    <location>
        <begin position="180"/>
        <end position="206"/>
    </location>
</feature>
<feature type="transmembrane region" description="Helical" evidence="4">
    <location>
        <begin position="207"/>
        <end position="227"/>
    </location>
</feature>
<feature type="topological domain" description="Extracellular" evidence="4">
    <location>
        <begin position="228"/>
        <end position="238"/>
    </location>
</feature>
<feature type="transmembrane region" description="Helical" evidence="4">
    <location>
        <begin position="239"/>
        <end position="259"/>
    </location>
</feature>
<feature type="topological domain" description="Cytoplasmic" evidence="4">
    <location>
        <begin position="260"/>
        <end position="329"/>
    </location>
</feature>
<feature type="transmembrane region" description="Helical" evidence="4">
    <location>
        <begin position="330"/>
        <end position="350"/>
    </location>
</feature>
<feature type="topological domain" description="Extracellular" evidence="4">
    <location>
        <begin position="351"/>
        <end position="405"/>
    </location>
</feature>
<feature type="transmembrane region" description="Helical" evidence="4">
    <location>
        <begin position="406"/>
        <end position="426"/>
    </location>
</feature>
<feature type="topological domain" description="Cytoplasmic" evidence="4">
    <location>
        <begin position="427"/>
        <end position="445"/>
    </location>
</feature>
<feature type="transmembrane region" description="Helical" evidence="4">
    <location>
        <begin position="446"/>
        <end position="466"/>
    </location>
</feature>
<feature type="topological domain" description="Extracellular" evidence="4">
    <location>
        <begin position="467"/>
        <end position="472"/>
    </location>
</feature>
<feature type="modified residue" description="Phosphoserine" evidence="3">
    <location>
        <position position="371"/>
    </location>
</feature>
<feature type="glycosylation site" description="N-linked (GlcNAc...) asparagine" evidence="4">
    <location>
        <position position="34"/>
    </location>
</feature>
<feature type="sequence conflict" description="In Ref. 1; AAD54420." evidence="8" ref="1">
    <original>G</original>
    <variation>A</variation>
    <location>
        <position position="6"/>
    </location>
</feature>
<feature type="sequence conflict" description="In Ref. 4; BAC27253." evidence="8" ref="4">
    <original>F</original>
    <variation>I</variation>
    <location>
        <position position="108"/>
    </location>
</feature>
<feature type="sequence conflict" description="In Ref. 5; AAH11295/AAH22901/AAH29026." evidence="8" ref="5">
    <original>V</original>
    <variation>F</variation>
    <location>
        <position position="162"/>
    </location>
</feature>
<feature type="sequence conflict" description="In Ref. 1 and 6." evidence="8" ref="1 6">
    <original>A</original>
    <variation>R</variation>
    <location>
        <position position="324"/>
    </location>
</feature>
<feature type="sequence conflict" description="In Ref. 5; AAH11295/AAH22901/AAH29026." evidence="8" ref="5">
    <original>S</original>
    <variation>N</variation>
    <location>
        <position position="403"/>
    </location>
</feature>
<evidence type="ECO:0000250" key="1">
    <source>
        <dbReference type="UniProtKB" id="Q13530"/>
    </source>
</evidence>
<evidence type="ECO:0000250" key="2">
    <source>
        <dbReference type="UniProtKB" id="Q86VE9"/>
    </source>
</evidence>
<evidence type="ECO:0000250" key="3">
    <source>
        <dbReference type="UniProtKB" id="Q9NRX5"/>
    </source>
</evidence>
<evidence type="ECO:0000255" key="4"/>
<evidence type="ECO:0000269" key="5">
    <source>
    </source>
</evidence>
<evidence type="ECO:0000269" key="6">
    <source>
    </source>
</evidence>
<evidence type="ECO:0000303" key="7">
    <source>
    </source>
</evidence>
<evidence type="ECO:0000305" key="8"/>
<organism>
    <name type="scientific">Mus musculus</name>
    <name type="common">Mouse</name>
    <dbReference type="NCBI Taxonomy" id="10090"/>
    <lineage>
        <taxon>Eukaryota</taxon>
        <taxon>Metazoa</taxon>
        <taxon>Chordata</taxon>
        <taxon>Craniata</taxon>
        <taxon>Vertebrata</taxon>
        <taxon>Euteleostomi</taxon>
        <taxon>Mammalia</taxon>
        <taxon>Eutheria</taxon>
        <taxon>Euarchontoglires</taxon>
        <taxon>Glires</taxon>
        <taxon>Rodentia</taxon>
        <taxon>Myomorpha</taxon>
        <taxon>Muroidea</taxon>
        <taxon>Muridae</taxon>
        <taxon>Murinae</taxon>
        <taxon>Mus</taxon>
        <taxon>Mus</taxon>
    </lineage>
</organism>
<name>SERC3_MOUSE</name>
<keyword id="KW-0051">Antiviral defense</keyword>
<keyword id="KW-1003">Cell membrane</keyword>
<keyword id="KW-0325">Glycoprotein</keyword>
<keyword id="KW-0333">Golgi apparatus</keyword>
<keyword id="KW-0391">Immunity</keyword>
<keyword id="KW-0399">Innate immunity</keyword>
<keyword id="KW-0472">Membrane</keyword>
<keyword id="KW-0597">Phosphoprotein</keyword>
<keyword id="KW-1185">Reference proteome</keyword>
<keyword id="KW-0812">Transmembrane</keyword>
<keyword id="KW-1133">Transmembrane helix</keyword>
<dbReference type="EMBL" id="AF181684">
    <property type="protein sequence ID" value="AAD54420.1"/>
    <property type="molecule type" value="mRNA"/>
</dbReference>
<dbReference type="EMBL" id="AB029499">
    <property type="protein sequence ID" value="BAC44828.1"/>
    <property type="molecule type" value="mRNA"/>
</dbReference>
<dbReference type="EMBL" id="AB078029">
    <property type="protein sequence ID" value="BAC05511.1"/>
    <property type="molecule type" value="Genomic_DNA"/>
</dbReference>
<dbReference type="EMBL" id="AK031101">
    <property type="protein sequence ID" value="BAC27253.1"/>
    <property type="molecule type" value="mRNA"/>
</dbReference>
<dbReference type="EMBL" id="AK150106">
    <property type="protein sequence ID" value="BAE29313.1"/>
    <property type="molecule type" value="mRNA"/>
</dbReference>
<dbReference type="EMBL" id="AK152720">
    <property type="protein sequence ID" value="BAE31443.1"/>
    <property type="molecule type" value="mRNA"/>
</dbReference>
<dbReference type="EMBL" id="AK155921">
    <property type="protein sequence ID" value="BAE33504.1"/>
    <property type="molecule type" value="mRNA"/>
</dbReference>
<dbReference type="EMBL" id="AK159347">
    <property type="protein sequence ID" value="BAE35009.1"/>
    <property type="molecule type" value="mRNA"/>
</dbReference>
<dbReference type="EMBL" id="AK159819">
    <property type="protein sequence ID" value="BAE35399.1"/>
    <property type="molecule type" value="mRNA"/>
</dbReference>
<dbReference type="EMBL" id="AK160005">
    <property type="protein sequence ID" value="BAE35553.1"/>
    <property type="molecule type" value="mRNA"/>
</dbReference>
<dbReference type="EMBL" id="AK160055">
    <property type="protein sequence ID" value="BAE35593.1"/>
    <property type="molecule type" value="mRNA"/>
</dbReference>
<dbReference type="EMBL" id="AK161981">
    <property type="protein sequence ID" value="BAE36664.1"/>
    <property type="molecule type" value="mRNA"/>
</dbReference>
<dbReference type="EMBL" id="AK164807">
    <property type="protein sequence ID" value="BAE37929.1"/>
    <property type="molecule type" value="mRNA"/>
</dbReference>
<dbReference type="EMBL" id="AK166924">
    <property type="protein sequence ID" value="BAE39119.1"/>
    <property type="molecule type" value="mRNA"/>
</dbReference>
<dbReference type="EMBL" id="AK170350">
    <property type="protein sequence ID" value="BAE41738.1"/>
    <property type="molecule type" value="mRNA"/>
</dbReference>
<dbReference type="EMBL" id="BC011295">
    <property type="protein sequence ID" value="AAH11295.1"/>
    <property type="molecule type" value="mRNA"/>
</dbReference>
<dbReference type="EMBL" id="BC022901">
    <property type="protein sequence ID" value="AAH22901.1"/>
    <property type="molecule type" value="mRNA"/>
</dbReference>
<dbReference type="EMBL" id="BC029026">
    <property type="protein sequence ID" value="AAH29026.1"/>
    <property type="molecule type" value="mRNA"/>
</dbReference>
<dbReference type="EMBL" id="L29441">
    <property type="protein sequence ID" value="AAA74236.1"/>
    <property type="status" value="ALT_INIT"/>
    <property type="molecule type" value="mRNA"/>
</dbReference>
<dbReference type="CCDS" id="CCDS17013.1"/>
<dbReference type="PIR" id="I53063">
    <property type="entry name" value="I53063"/>
</dbReference>
<dbReference type="RefSeq" id="NP_036162.3">
    <property type="nucleotide sequence ID" value="NM_012032.4"/>
</dbReference>
<dbReference type="SMR" id="Q9QZI9"/>
<dbReference type="FunCoup" id="Q9QZI9">
    <property type="interactions" value="2935"/>
</dbReference>
<dbReference type="STRING" id="10090.ENSMUSP00000017851"/>
<dbReference type="GlyCosmos" id="Q9QZI9">
    <property type="glycosylation" value="1 site, No reported glycans"/>
</dbReference>
<dbReference type="GlyGen" id="Q9QZI9">
    <property type="glycosylation" value="1 site"/>
</dbReference>
<dbReference type="iPTMnet" id="Q9QZI9"/>
<dbReference type="PhosphoSitePlus" id="Q9QZI9"/>
<dbReference type="SwissPalm" id="Q9QZI9"/>
<dbReference type="jPOST" id="Q9QZI9"/>
<dbReference type="PaxDb" id="10090-ENSMUSP00000017851"/>
<dbReference type="ProteomicsDB" id="256966"/>
<dbReference type="Antibodypedia" id="43693">
    <property type="antibodies" value="184 antibodies from 28 providers"/>
</dbReference>
<dbReference type="DNASU" id="26943"/>
<dbReference type="Ensembl" id="ENSMUST00000017851.4">
    <property type="protein sequence ID" value="ENSMUSP00000017851.4"/>
    <property type="gene ID" value="ENSMUSG00000017707.10"/>
</dbReference>
<dbReference type="GeneID" id="26943"/>
<dbReference type="KEGG" id="mmu:26943"/>
<dbReference type="UCSC" id="uc008ntg.2">
    <property type="organism name" value="mouse"/>
</dbReference>
<dbReference type="AGR" id="MGI:1349457"/>
<dbReference type="CTD" id="10955"/>
<dbReference type="MGI" id="MGI:1349457">
    <property type="gene designation" value="Serinc3"/>
</dbReference>
<dbReference type="VEuPathDB" id="HostDB:ENSMUSG00000017707"/>
<dbReference type="eggNOG" id="KOG2592">
    <property type="taxonomic scope" value="Eukaryota"/>
</dbReference>
<dbReference type="GeneTree" id="ENSGT01030000234623"/>
<dbReference type="HOGENOM" id="CLU_029574_5_0_1"/>
<dbReference type="InParanoid" id="Q9QZI9"/>
<dbReference type="OMA" id="KSPQWWD"/>
<dbReference type="OrthoDB" id="5963193at2759"/>
<dbReference type="PhylomeDB" id="Q9QZI9"/>
<dbReference type="TreeFam" id="TF312881"/>
<dbReference type="Reactome" id="R-MMU-977347">
    <property type="pathway name" value="Serine biosynthesis"/>
</dbReference>
<dbReference type="BioGRID-ORCS" id="26943">
    <property type="hits" value="3 hits in 75 CRISPR screens"/>
</dbReference>
<dbReference type="ChiTaRS" id="Serinc3">
    <property type="organism name" value="mouse"/>
</dbReference>
<dbReference type="PRO" id="PR:Q9QZI9"/>
<dbReference type="Proteomes" id="UP000000589">
    <property type="component" value="Chromosome 2"/>
</dbReference>
<dbReference type="RNAct" id="Q9QZI9">
    <property type="molecule type" value="protein"/>
</dbReference>
<dbReference type="Bgee" id="ENSMUSG00000017707">
    <property type="expression patterns" value="Expressed in lobe of prostate and 276 other cell types or tissues"/>
</dbReference>
<dbReference type="GO" id="GO:0005794">
    <property type="term" value="C:Golgi apparatus"/>
    <property type="evidence" value="ECO:0000314"/>
    <property type="project" value="MGI"/>
</dbReference>
<dbReference type="GO" id="GO:0000139">
    <property type="term" value="C:Golgi membrane"/>
    <property type="evidence" value="ECO:0007669"/>
    <property type="project" value="UniProtKB-SubCell"/>
</dbReference>
<dbReference type="GO" id="GO:0005886">
    <property type="term" value="C:plasma membrane"/>
    <property type="evidence" value="ECO:0000314"/>
    <property type="project" value="MGI"/>
</dbReference>
<dbReference type="GO" id="GO:0017128">
    <property type="term" value="F:phospholipid scramblase activity"/>
    <property type="evidence" value="ECO:0000250"/>
    <property type="project" value="UniProtKB"/>
</dbReference>
<dbReference type="GO" id="GO:0140374">
    <property type="term" value="P:antiviral innate immune response"/>
    <property type="evidence" value="ECO:0000250"/>
    <property type="project" value="UniProtKB"/>
</dbReference>
<dbReference type="GO" id="GO:0017121">
    <property type="term" value="P:plasma membrane phospholipid scrambling"/>
    <property type="evidence" value="ECO:0000250"/>
    <property type="project" value="UniProtKB"/>
</dbReference>
<dbReference type="GO" id="GO:1902237">
    <property type="term" value="P:positive regulation of endoplasmic reticulum stress-induced intrinsic apoptotic signaling pathway"/>
    <property type="evidence" value="ECO:0000314"/>
    <property type="project" value="MGI"/>
</dbReference>
<dbReference type="InterPro" id="IPR005016">
    <property type="entry name" value="TDE1/TMS"/>
</dbReference>
<dbReference type="PANTHER" id="PTHR10383">
    <property type="entry name" value="SERINE INCORPORATOR"/>
    <property type="match status" value="1"/>
</dbReference>
<dbReference type="PANTHER" id="PTHR10383:SF51">
    <property type="entry name" value="SERINE INCORPORATOR 3"/>
    <property type="match status" value="1"/>
</dbReference>
<dbReference type="Pfam" id="PF03348">
    <property type="entry name" value="Serinc"/>
    <property type="match status" value="1"/>
</dbReference>
<sequence length="472" mass="52623">MGAVLGVFSLASWVPCLCSGASCLLCSCCPISKNSTVTRLIYAFILFLGTIVSCIMMTEGIQTQLKKIPGFCEGGFQIKMVDTKAEKDCDVLVGFKAVYRINFAVAIFFFAFFLLMLKVKTSKDPRAAVHNGFWFFKIAAIIGIMIGSFYIPGGSFTEVWFVAGMLGASFFIIIQLVLLVDMAHSWNELWVNRMEEGNPRLWYAALLSFTSLFYILSIVFAALLYVFYTKPDDCTENKVFISLNLIFCVAVSIVSILPKVQEHQPRSGLLQSSIITLYTLYLTWSAMTNEPERSCNPSLMSIITHLTSPTVSPANSTTLAPAYAPPSQSGHFMNLDDIWGLIIFVFCLIYSSFRTSSNSQVNKLTLSGSDSVILGDTTNGANDEEDGQPRRAVDNEKEGVQYSYSFFHLMLCCASLYIMMTITSWYSPDAKFQKVSSKWLAVWFKMGSSWLCLLLYLWTLVAPLVLTGRDFS</sequence>
<protein>
    <recommendedName>
        <fullName>Serine incorporator 3</fullName>
    </recommendedName>
    <alternativeName>
        <fullName evidence="7">Axotomy-induced glyco/Golgi protein 1</fullName>
        <shortName evidence="7">AIGP-1</shortName>
    </alternativeName>
    <alternativeName>
        <fullName evidence="7">Axotomy-induced glycoprotein 1</fullName>
    </alternativeName>
    <alternativeName>
        <fullName>Membrane protein TMS-1</fullName>
    </alternativeName>
    <alternativeName>
        <fullName>Tumor differentially expressed protein 1</fullName>
    </alternativeName>
</protein>
<accession>Q9QZI9</accession>
<accession>Q3U7C6</accession>
<accession>Q62310</accession>
<accession>Q8BSP9</accession>
<accession>Q8CFD3</accession>
<accession>Q91VN9</accession>
<reference key="1">
    <citation type="journal article" date="2000" name="J. Exp. Biol.">
        <title>Identification of a ubiquitous family of membrane proteins and their expression in mouse brain.</title>
        <authorList>
            <person name="Grossman T.R."/>
            <person name="Luque J.M."/>
            <person name="Nelson N."/>
        </authorList>
    </citation>
    <scope>NUCLEOTIDE SEQUENCE [MRNA]</scope>
    <scope>TISSUE SPECIFICITY</scope>
</reference>
<reference key="2">
    <citation type="journal article" date="2002" name="J. Neurosci.">
        <title>Identification of an axotomy-induced glycosylated protein, AIGP1, possibly involved in cell death triggered by endoplasmic reticulum-Golgi stress.</title>
        <authorList>
            <person name="Aoki S."/>
            <person name="Su Q."/>
            <person name="Li H."/>
            <person name="Nishikawa K."/>
            <person name="Ayukawa K."/>
            <person name="Hara Y."/>
            <person name="Namikawa K."/>
            <person name="Kiryu-Seo S."/>
            <person name="Kiyama H."/>
            <person name="Wada K."/>
        </authorList>
    </citation>
    <scope>NUCLEOTIDE SEQUENCE [MRNA]</scope>
    <scope>GLYCOSYLATION</scope>
    <scope>SUBCELLULAR LOCATION</scope>
    <source>
        <tissue>Hypoglossal nucleus</tissue>
    </source>
</reference>
<reference key="3">
    <citation type="submission" date="2002-01" db="EMBL/GenBank/DDBJ databases">
        <title>An axotomy activated gene, mouse AIGP1: genomic organization, transcriptional regulation and genetic mapping on chromosome 2.</title>
        <authorList>
            <person name="Li H."/>
            <person name="Aoki S."/>
            <person name="Hara Y."/>
            <person name="Wada K."/>
        </authorList>
    </citation>
    <scope>NUCLEOTIDE SEQUENCE [GENOMIC DNA]</scope>
    <source>
        <tissue>Brain</tissue>
    </source>
</reference>
<reference key="4">
    <citation type="journal article" date="2005" name="Science">
        <title>The transcriptional landscape of the mammalian genome.</title>
        <authorList>
            <person name="Carninci P."/>
            <person name="Kasukawa T."/>
            <person name="Katayama S."/>
            <person name="Gough J."/>
            <person name="Frith M.C."/>
            <person name="Maeda N."/>
            <person name="Oyama R."/>
            <person name="Ravasi T."/>
            <person name="Lenhard B."/>
            <person name="Wells C."/>
            <person name="Kodzius R."/>
            <person name="Shimokawa K."/>
            <person name="Bajic V.B."/>
            <person name="Brenner S.E."/>
            <person name="Batalov S."/>
            <person name="Forrest A.R."/>
            <person name="Zavolan M."/>
            <person name="Davis M.J."/>
            <person name="Wilming L.G."/>
            <person name="Aidinis V."/>
            <person name="Allen J.E."/>
            <person name="Ambesi-Impiombato A."/>
            <person name="Apweiler R."/>
            <person name="Aturaliya R.N."/>
            <person name="Bailey T.L."/>
            <person name="Bansal M."/>
            <person name="Baxter L."/>
            <person name="Beisel K.W."/>
            <person name="Bersano T."/>
            <person name="Bono H."/>
            <person name="Chalk A.M."/>
            <person name="Chiu K.P."/>
            <person name="Choudhary V."/>
            <person name="Christoffels A."/>
            <person name="Clutterbuck D.R."/>
            <person name="Crowe M.L."/>
            <person name="Dalla E."/>
            <person name="Dalrymple B.P."/>
            <person name="de Bono B."/>
            <person name="Della Gatta G."/>
            <person name="di Bernardo D."/>
            <person name="Down T."/>
            <person name="Engstrom P."/>
            <person name="Fagiolini M."/>
            <person name="Faulkner G."/>
            <person name="Fletcher C.F."/>
            <person name="Fukushima T."/>
            <person name="Furuno M."/>
            <person name="Futaki S."/>
            <person name="Gariboldi M."/>
            <person name="Georgii-Hemming P."/>
            <person name="Gingeras T.R."/>
            <person name="Gojobori T."/>
            <person name="Green R.E."/>
            <person name="Gustincich S."/>
            <person name="Harbers M."/>
            <person name="Hayashi Y."/>
            <person name="Hensch T.K."/>
            <person name="Hirokawa N."/>
            <person name="Hill D."/>
            <person name="Huminiecki L."/>
            <person name="Iacono M."/>
            <person name="Ikeo K."/>
            <person name="Iwama A."/>
            <person name="Ishikawa T."/>
            <person name="Jakt M."/>
            <person name="Kanapin A."/>
            <person name="Katoh M."/>
            <person name="Kawasawa Y."/>
            <person name="Kelso J."/>
            <person name="Kitamura H."/>
            <person name="Kitano H."/>
            <person name="Kollias G."/>
            <person name="Krishnan S.P."/>
            <person name="Kruger A."/>
            <person name="Kummerfeld S.K."/>
            <person name="Kurochkin I.V."/>
            <person name="Lareau L.F."/>
            <person name="Lazarevic D."/>
            <person name="Lipovich L."/>
            <person name="Liu J."/>
            <person name="Liuni S."/>
            <person name="McWilliam S."/>
            <person name="Madan Babu M."/>
            <person name="Madera M."/>
            <person name="Marchionni L."/>
            <person name="Matsuda H."/>
            <person name="Matsuzawa S."/>
            <person name="Miki H."/>
            <person name="Mignone F."/>
            <person name="Miyake S."/>
            <person name="Morris K."/>
            <person name="Mottagui-Tabar S."/>
            <person name="Mulder N."/>
            <person name="Nakano N."/>
            <person name="Nakauchi H."/>
            <person name="Ng P."/>
            <person name="Nilsson R."/>
            <person name="Nishiguchi S."/>
            <person name="Nishikawa S."/>
            <person name="Nori F."/>
            <person name="Ohara O."/>
            <person name="Okazaki Y."/>
            <person name="Orlando V."/>
            <person name="Pang K.C."/>
            <person name="Pavan W.J."/>
            <person name="Pavesi G."/>
            <person name="Pesole G."/>
            <person name="Petrovsky N."/>
            <person name="Piazza S."/>
            <person name="Reed J."/>
            <person name="Reid J.F."/>
            <person name="Ring B.Z."/>
            <person name="Ringwald M."/>
            <person name="Rost B."/>
            <person name="Ruan Y."/>
            <person name="Salzberg S.L."/>
            <person name="Sandelin A."/>
            <person name="Schneider C."/>
            <person name="Schoenbach C."/>
            <person name="Sekiguchi K."/>
            <person name="Semple C.A."/>
            <person name="Seno S."/>
            <person name="Sessa L."/>
            <person name="Sheng Y."/>
            <person name="Shibata Y."/>
            <person name="Shimada H."/>
            <person name="Shimada K."/>
            <person name="Silva D."/>
            <person name="Sinclair B."/>
            <person name="Sperling S."/>
            <person name="Stupka E."/>
            <person name="Sugiura K."/>
            <person name="Sultana R."/>
            <person name="Takenaka Y."/>
            <person name="Taki K."/>
            <person name="Tammoja K."/>
            <person name="Tan S.L."/>
            <person name="Tang S."/>
            <person name="Taylor M.S."/>
            <person name="Tegner J."/>
            <person name="Teichmann S.A."/>
            <person name="Ueda H.R."/>
            <person name="van Nimwegen E."/>
            <person name="Verardo R."/>
            <person name="Wei C.L."/>
            <person name="Yagi K."/>
            <person name="Yamanishi H."/>
            <person name="Zabarovsky E."/>
            <person name="Zhu S."/>
            <person name="Zimmer A."/>
            <person name="Hide W."/>
            <person name="Bult C."/>
            <person name="Grimmond S.M."/>
            <person name="Teasdale R.D."/>
            <person name="Liu E.T."/>
            <person name="Brusic V."/>
            <person name="Quackenbush J."/>
            <person name="Wahlestedt C."/>
            <person name="Mattick J.S."/>
            <person name="Hume D.A."/>
            <person name="Kai C."/>
            <person name="Sasaki D."/>
            <person name="Tomaru Y."/>
            <person name="Fukuda S."/>
            <person name="Kanamori-Katayama M."/>
            <person name="Suzuki M."/>
            <person name="Aoki J."/>
            <person name="Arakawa T."/>
            <person name="Iida J."/>
            <person name="Imamura K."/>
            <person name="Itoh M."/>
            <person name="Kato T."/>
            <person name="Kawaji H."/>
            <person name="Kawagashira N."/>
            <person name="Kawashima T."/>
            <person name="Kojima M."/>
            <person name="Kondo S."/>
            <person name="Konno H."/>
            <person name="Nakano K."/>
            <person name="Ninomiya N."/>
            <person name="Nishio T."/>
            <person name="Okada M."/>
            <person name="Plessy C."/>
            <person name="Shibata K."/>
            <person name="Shiraki T."/>
            <person name="Suzuki S."/>
            <person name="Tagami M."/>
            <person name="Waki K."/>
            <person name="Watahiki A."/>
            <person name="Okamura-Oho Y."/>
            <person name="Suzuki H."/>
            <person name="Kawai J."/>
            <person name="Hayashizaki Y."/>
        </authorList>
    </citation>
    <scope>NUCLEOTIDE SEQUENCE [LARGE SCALE MRNA]</scope>
    <source>
        <strain>C57BL/6J</strain>
        <strain>NOD</strain>
        <tissue>Bone marrow</tissue>
        <tissue>Cerebellum</tissue>
        <tissue>Forelimb</tissue>
        <tissue>Heart</tissue>
    </source>
</reference>
<reference key="5">
    <citation type="journal article" date="2004" name="Genome Res.">
        <title>The status, quality, and expansion of the NIH full-length cDNA project: the Mammalian Gene Collection (MGC).</title>
        <authorList>
            <consortium name="The MGC Project Team"/>
        </authorList>
    </citation>
    <scope>NUCLEOTIDE SEQUENCE [LARGE SCALE MRNA]</scope>
    <source>
        <tissue>Mammary tumor</tissue>
    </source>
</reference>
<reference key="6">
    <citation type="journal article" date="1994" name="DNA Seq.">
        <title>Sequence analysis of a novel cDNA which is overexpressed in testicular tumors from polyomavirus large T-antigen transgenic mice.</title>
        <authorList>
            <person name="Lebel M."/>
            <person name="Mes-Masson A.-M."/>
        </authorList>
    </citation>
    <scope>NUCLEOTIDE SEQUENCE [MRNA] OF 67-472</scope>
    <source>
        <tissue>Testis</tissue>
    </source>
</reference>
<reference key="7">
    <citation type="journal article" date="2007" name="Proc. Natl. Acad. Sci. U.S.A.">
        <title>Large-scale phosphorylation analysis of mouse liver.</title>
        <authorList>
            <person name="Villen J."/>
            <person name="Beausoleil S.A."/>
            <person name="Gerber S.A."/>
            <person name="Gygi S.P."/>
        </authorList>
    </citation>
    <scope>IDENTIFICATION BY MASS SPECTROMETRY [LARGE SCALE ANALYSIS]</scope>
    <source>
        <tissue>Liver</tissue>
    </source>
</reference>
<reference key="8">
    <citation type="journal article" date="2009" name="Immunity">
        <title>The phagosomal proteome in interferon-gamma-activated macrophages.</title>
        <authorList>
            <person name="Trost M."/>
            <person name="English L."/>
            <person name="Lemieux S."/>
            <person name="Courcelles M."/>
            <person name="Desjardins M."/>
            <person name="Thibault P."/>
        </authorList>
    </citation>
    <scope>IDENTIFICATION BY MASS SPECTROMETRY [LARGE SCALE ANALYSIS]</scope>
</reference>
<reference key="9">
    <citation type="journal article" date="2010" name="Cell">
        <title>A tissue-specific atlas of mouse protein phosphorylation and expression.</title>
        <authorList>
            <person name="Huttlin E.L."/>
            <person name="Jedrychowski M.P."/>
            <person name="Elias J.E."/>
            <person name="Goswami T."/>
            <person name="Rad R."/>
            <person name="Beausoleil S.A."/>
            <person name="Villen J."/>
            <person name="Haas W."/>
            <person name="Sowa M.E."/>
            <person name="Gygi S.P."/>
        </authorList>
    </citation>
    <scope>IDENTIFICATION BY MASS SPECTROMETRY [LARGE SCALE ANALYSIS]</scope>
    <source>
        <tissue>Heart</tissue>
        <tissue>Pancreas</tissue>
        <tissue>Spleen</tissue>
        <tissue>Testis</tissue>
    </source>
</reference>
<comment type="function">
    <text evidence="1">Restriction factor required to restrict infectivity of gammaretroviruses: acts by inhibiting an early step of viral infection. Impairs the penetration of the viral particle into the cytoplasm. Non-ATP-dependent, non-specific lipid transporter for phosphatidylserine, phosphatidylcholine, and phosphatidylethanolamine. Functions as a scramblase that flips lipids in both directions across the membrane. Phospholipid scrambling results in gammaretroviral surface exposure of phosphatidylserine and loss of membrane asymmetry, which leads to loss of infectivity.</text>
</comment>
<comment type="catalytic activity">
    <reaction evidence="1">
        <text>a 1,2-diacyl-sn-glycero-3-phospho-L-serine(in) = a 1,2-diacyl-sn-glycero-3-phospho-L-serine(out)</text>
        <dbReference type="Rhea" id="RHEA:38663"/>
        <dbReference type="ChEBI" id="CHEBI:57262"/>
    </reaction>
</comment>
<comment type="catalytic activity">
    <reaction evidence="1">
        <text>a 1,2-diacyl-sn-glycero-3-phosphocholine(in) = a 1,2-diacyl-sn-glycero-3-phosphocholine(out)</text>
        <dbReference type="Rhea" id="RHEA:38571"/>
        <dbReference type="ChEBI" id="CHEBI:57643"/>
    </reaction>
</comment>
<comment type="catalytic activity">
    <reaction evidence="1">
        <text>a 1,2-diacyl-sn-glycero-3-phosphoethanolamine(in) = a 1,2-diacyl-sn-glycero-3-phosphoethanolamine(out)</text>
        <dbReference type="Rhea" id="RHEA:38895"/>
        <dbReference type="ChEBI" id="CHEBI:64612"/>
    </reaction>
</comment>
<comment type="subcellular location">
    <subcellularLocation>
        <location evidence="6">Cell membrane</location>
        <topology evidence="6">Multi-pass membrane protein</topology>
    </subcellularLocation>
    <subcellularLocation>
        <location evidence="6">Golgi apparatus membrane</location>
        <topology evidence="6">Multi-pass membrane protein</topology>
    </subcellularLocation>
    <text evidence="2">Localizes to the cell membrane, where it is efficiently incorporated into budding gammaretrovirus virions and impairs subsequent virion penetration of susceptible target cells (By similarity).</text>
</comment>
<comment type="tissue specificity">
    <text evidence="5">Highly expressed in the neuronal populations such as Purkinje cells in the cerebellum, brainstem and spinal motor neurons, locus coeruleus and raphe nuclei. Highly expressed also in thymus, kidney liver and testis.</text>
</comment>
<comment type="PTM">
    <text evidence="6">N-glycosylated.</text>
</comment>
<comment type="similarity">
    <text evidence="8">Belongs to the TDE1 family.</text>
</comment>
<comment type="sequence caution" evidence="8">
    <conflict type="erroneous initiation">
        <sequence resource="EMBL-CDS" id="AAA74236"/>
    </conflict>
    <text>Truncated N-terminus.</text>
</comment>
<proteinExistence type="evidence at protein level"/>
<gene>
    <name type="primary">Serinc3</name>
    <name evidence="7" type="synonym">Aigp1</name>
    <name type="synonym">Diff33</name>
    <name type="synonym">Tde1</name>
    <name type="synonym">Tms1</name>
</gene>